<comment type="catalytic activity">
    <reaction evidence="1">
        <text>tRNA(Gly) + glycine + ATP = glycyl-tRNA(Gly) + AMP + diphosphate</text>
        <dbReference type="Rhea" id="RHEA:16013"/>
        <dbReference type="Rhea" id="RHEA-COMP:9664"/>
        <dbReference type="Rhea" id="RHEA-COMP:9683"/>
        <dbReference type="ChEBI" id="CHEBI:30616"/>
        <dbReference type="ChEBI" id="CHEBI:33019"/>
        <dbReference type="ChEBI" id="CHEBI:57305"/>
        <dbReference type="ChEBI" id="CHEBI:78442"/>
        <dbReference type="ChEBI" id="CHEBI:78522"/>
        <dbReference type="ChEBI" id="CHEBI:456215"/>
        <dbReference type="EC" id="6.1.1.14"/>
    </reaction>
</comment>
<comment type="subunit">
    <text evidence="1">Tetramer of two alpha and two beta subunits.</text>
</comment>
<comment type="subcellular location">
    <subcellularLocation>
        <location evidence="1">Cytoplasm</location>
    </subcellularLocation>
</comment>
<comment type="similarity">
    <text evidence="1">Belongs to the class-II aminoacyl-tRNA synthetase family.</text>
</comment>
<organism>
    <name type="scientific">Brucella abortus biovar 1 (strain 9-941)</name>
    <dbReference type="NCBI Taxonomy" id="262698"/>
    <lineage>
        <taxon>Bacteria</taxon>
        <taxon>Pseudomonadati</taxon>
        <taxon>Pseudomonadota</taxon>
        <taxon>Alphaproteobacteria</taxon>
        <taxon>Hyphomicrobiales</taxon>
        <taxon>Brucellaceae</taxon>
        <taxon>Brucella/Ochrobactrum group</taxon>
        <taxon>Brucella</taxon>
    </lineage>
</organism>
<gene>
    <name evidence="1" type="primary">glyQ</name>
    <name type="ordered locus">BruAb1_0426</name>
</gene>
<dbReference type="EC" id="6.1.1.14" evidence="1"/>
<dbReference type="EMBL" id="AE017223">
    <property type="protein sequence ID" value="AAX73822.1"/>
    <property type="molecule type" value="Genomic_DNA"/>
</dbReference>
<dbReference type="RefSeq" id="WP_002963561.1">
    <property type="nucleotide sequence ID" value="NC_006932.1"/>
</dbReference>
<dbReference type="SMR" id="Q57EW2"/>
<dbReference type="EnsemblBacteria" id="AAX73822">
    <property type="protein sequence ID" value="AAX73822"/>
    <property type="gene ID" value="BruAb1_0426"/>
</dbReference>
<dbReference type="KEGG" id="bmb:BruAb1_0426"/>
<dbReference type="HOGENOM" id="CLU_057066_1_0_5"/>
<dbReference type="Proteomes" id="UP000000540">
    <property type="component" value="Chromosome I"/>
</dbReference>
<dbReference type="GO" id="GO:0005829">
    <property type="term" value="C:cytosol"/>
    <property type="evidence" value="ECO:0007669"/>
    <property type="project" value="TreeGrafter"/>
</dbReference>
<dbReference type="GO" id="GO:0005524">
    <property type="term" value="F:ATP binding"/>
    <property type="evidence" value="ECO:0007669"/>
    <property type="project" value="UniProtKB-UniRule"/>
</dbReference>
<dbReference type="GO" id="GO:0004820">
    <property type="term" value="F:glycine-tRNA ligase activity"/>
    <property type="evidence" value="ECO:0007669"/>
    <property type="project" value="UniProtKB-UniRule"/>
</dbReference>
<dbReference type="GO" id="GO:0006426">
    <property type="term" value="P:glycyl-tRNA aminoacylation"/>
    <property type="evidence" value="ECO:0007669"/>
    <property type="project" value="UniProtKB-UniRule"/>
</dbReference>
<dbReference type="CDD" id="cd00733">
    <property type="entry name" value="GlyRS_alpha_core"/>
    <property type="match status" value="1"/>
</dbReference>
<dbReference type="FunFam" id="3.30.930.10:FF:000006">
    <property type="entry name" value="Glycine--tRNA ligase alpha subunit"/>
    <property type="match status" value="1"/>
</dbReference>
<dbReference type="Gene3D" id="3.30.930.10">
    <property type="entry name" value="Bira Bifunctional Protein, Domain 2"/>
    <property type="match status" value="1"/>
</dbReference>
<dbReference type="Gene3D" id="1.20.58.180">
    <property type="entry name" value="Class II aaRS and biotin synthetases, domain 2"/>
    <property type="match status" value="1"/>
</dbReference>
<dbReference type="HAMAP" id="MF_00254">
    <property type="entry name" value="Gly_tRNA_synth_alpha"/>
    <property type="match status" value="1"/>
</dbReference>
<dbReference type="InterPro" id="IPR045864">
    <property type="entry name" value="aa-tRNA-synth_II/BPL/LPL"/>
</dbReference>
<dbReference type="InterPro" id="IPR006194">
    <property type="entry name" value="Gly-tRNA-synth_heterodimer"/>
</dbReference>
<dbReference type="InterPro" id="IPR002310">
    <property type="entry name" value="Gly-tRNA_ligase_asu"/>
</dbReference>
<dbReference type="NCBIfam" id="TIGR00388">
    <property type="entry name" value="glyQ"/>
    <property type="match status" value="1"/>
</dbReference>
<dbReference type="NCBIfam" id="NF006827">
    <property type="entry name" value="PRK09348.1"/>
    <property type="match status" value="1"/>
</dbReference>
<dbReference type="PANTHER" id="PTHR30075:SF2">
    <property type="entry name" value="GLYCINE--TRNA LIGASE, CHLOROPLASTIC_MITOCHONDRIAL 2"/>
    <property type="match status" value="1"/>
</dbReference>
<dbReference type="PANTHER" id="PTHR30075">
    <property type="entry name" value="GLYCYL-TRNA SYNTHETASE"/>
    <property type="match status" value="1"/>
</dbReference>
<dbReference type="Pfam" id="PF02091">
    <property type="entry name" value="tRNA-synt_2e"/>
    <property type="match status" value="1"/>
</dbReference>
<dbReference type="PRINTS" id="PR01044">
    <property type="entry name" value="TRNASYNTHGA"/>
</dbReference>
<dbReference type="SUPFAM" id="SSF55681">
    <property type="entry name" value="Class II aaRS and biotin synthetases"/>
    <property type="match status" value="1"/>
</dbReference>
<dbReference type="PROSITE" id="PS50861">
    <property type="entry name" value="AA_TRNA_LIGASE_II_GLYAB"/>
    <property type="match status" value="1"/>
</dbReference>
<name>SYGA_BRUAB</name>
<protein>
    <recommendedName>
        <fullName evidence="1">Glycine--tRNA ligase alpha subunit</fullName>
        <ecNumber evidence="1">6.1.1.14</ecNumber>
    </recommendedName>
    <alternativeName>
        <fullName evidence="1">Glycyl-tRNA synthetase alpha subunit</fullName>
        <shortName evidence="1">GlyRS</shortName>
    </alternativeName>
</protein>
<reference key="1">
    <citation type="journal article" date="2005" name="J. Bacteriol.">
        <title>Completion of the genome sequence of Brucella abortus and comparison to the highly similar genomes of Brucella melitensis and Brucella suis.</title>
        <authorList>
            <person name="Halling S.M."/>
            <person name="Peterson-Burch B.D."/>
            <person name="Bricker B.J."/>
            <person name="Zuerner R.L."/>
            <person name="Qing Z."/>
            <person name="Li L.-L."/>
            <person name="Kapur V."/>
            <person name="Alt D.P."/>
            <person name="Olsen S.C."/>
        </authorList>
    </citation>
    <scope>NUCLEOTIDE SEQUENCE [LARGE SCALE GENOMIC DNA]</scope>
    <source>
        <strain>9-941</strain>
    </source>
</reference>
<feature type="chain" id="PRO_1000047403" description="Glycine--tRNA ligase alpha subunit">
    <location>
        <begin position="1"/>
        <end position="308"/>
    </location>
</feature>
<proteinExistence type="inferred from homology"/>
<accession>Q57EW2</accession>
<sequence length="308" mass="34945">MHPTRSFQGLILTLHNYWAEHGCAILQPYDMEVGAGTFHPATTLRSLGPKPWKAAYVQPSRRPKDGRYGENPNRLQHYYQYQVLIKPSPPNLQDLYLGSLKAIGLDPTLHDVRFVEDDWESPTLGAWGLGWECWCDGMEVSQFTYFQQVCGIECSPVAGELTYGLERLAMYVQGVDNVYDLNFNGLEGDEKVTYGDVFLQAEQEYSRYNFEMANTETLHQHFIDAERECEAILKAGSTGENSLHKCVFPAYDQCIKASHVFNLMDARGVISVTERQGYILRVRNLARQCGEAFLLTDAGGFNFKREGE</sequence>
<keyword id="KW-0030">Aminoacyl-tRNA synthetase</keyword>
<keyword id="KW-0067">ATP-binding</keyword>
<keyword id="KW-0963">Cytoplasm</keyword>
<keyword id="KW-0436">Ligase</keyword>
<keyword id="KW-0547">Nucleotide-binding</keyword>
<keyword id="KW-0648">Protein biosynthesis</keyword>
<evidence type="ECO:0000255" key="1">
    <source>
        <dbReference type="HAMAP-Rule" id="MF_00254"/>
    </source>
</evidence>